<comment type="subcellular location">
    <subcellularLocation>
        <location evidence="1">Cellular thylakoid membrane</location>
        <topology evidence="1">Multi-pass membrane protein</topology>
    </subcellularLocation>
</comment>
<comment type="similarity">
    <text evidence="1">Belongs to the PsaL family.</text>
</comment>
<accession>A3PF09</accession>
<gene>
    <name evidence="1" type="primary">psaL</name>
    <name type="ordered locus">P9301_17111</name>
</gene>
<proteinExistence type="inferred from homology"/>
<sequence length="199" mass="21408">MSDFQKSFSESTSSIKFDEKYIDTSVQPNDIGVAEQWAVKTVADPCVGNLATPVNSGYFTKAFINNLPFYREGISPNFRGLETGAAFGYLLYGPFTMTGPLRNSEFALTAGLLATIGAVHILTALFVLYNAPGKAPNVQPPDATVNNPPKDLFTRAGWADFTSGFWLGGCGGAVFAWLLVGTLHLDSIMPIIKNIWTAG</sequence>
<protein>
    <recommendedName>
        <fullName evidence="1">Photosystem I reaction center subunit XI</fullName>
    </recommendedName>
    <alternativeName>
        <fullName evidence="1">PSI subunit V</fullName>
    </alternativeName>
    <alternativeName>
        <fullName evidence="1">PSI-L</fullName>
    </alternativeName>
</protein>
<evidence type="ECO:0000255" key="1">
    <source>
        <dbReference type="HAMAP-Rule" id="MF_00447"/>
    </source>
</evidence>
<feature type="chain" id="PRO_1000026178" description="Photosystem I reaction center subunit XI">
    <location>
        <begin position="1"/>
        <end position="199"/>
    </location>
</feature>
<feature type="transmembrane region" description="Helical" evidence="1">
    <location>
        <begin position="108"/>
        <end position="128"/>
    </location>
</feature>
<feature type="transmembrane region" description="Helical" evidence="1">
    <location>
        <begin position="165"/>
        <end position="185"/>
    </location>
</feature>
<reference key="1">
    <citation type="journal article" date="2007" name="PLoS Genet.">
        <title>Patterns and implications of gene gain and loss in the evolution of Prochlorococcus.</title>
        <authorList>
            <person name="Kettler G.C."/>
            <person name="Martiny A.C."/>
            <person name="Huang K."/>
            <person name="Zucker J."/>
            <person name="Coleman M.L."/>
            <person name="Rodrigue S."/>
            <person name="Chen F."/>
            <person name="Lapidus A."/>
            <person name="Ferriera S."/>
            <person name="Johnson J."/>
            <person name="Steglich C."/>
            <person name="Church G.M."/>
            <person name="Richardson P."/>
            <person name="Chisholm S.W."/>
        </authorList>
    </citation>
    <scope>NUCLEOTIDE SEQUENCE [LARGE SCALE GENOMIC DNA]</scope>
    <source>
        <strain>MIT 9301</strain>
    </source>
</reference>
<keyword id="KW-0472">Membrane</keyword>
<keyword id="KW-0602">Photosynthesis</keyword>
<keyword id="KW-0603">Photosystem I</keyword>
<keyword id="KW-1185">Reference proteome</keyword>
<keyword id="KW-0793">Thylakoid</keyword>
<keyword id="KW-0812">Transmembrane</keyword>
<keyword id="KW-1133">Transmembrane helix</keyword>
<dbReference type="EMBL" id="CP000576">
    <property type="protein sequence ID" value="ABO18334.1"/>
    <property type="molecule type" value="Genomic_DNA"/>
</dbReference>
<dbReference type="RefSeq" id="WP_011863628.1">
    <property type="nucleotide sequence ID" value="NC_009091.1"/>
</dbReference>
<dbReference type="SMR" id="A3PF09"/>
<dbReference type="STRING" id="167546.P9301_17111"/>
<dbReference type="KEGG" id="pmg:P9301_17111"/>
<dbReference type="eggNOG" id="ENOG5033UPE">
    <property type="taxonomic scope" value="Bacteria"/>
</dbReference>
<dbReference type="HOGENOM" id="CLU_092204_1_0_3"/>
<dbReference type="OrthoDB" id="464381at2"/>
<dbReference type="Proteomes" id="UP000001430">
    <property type="component" value="Chromosome"/>
</dbReference>
<dbReference type="GO" id="GO:0009538">
    <property type="term" value="C:photosystem I reaction center"/>
    <property type="evidence" value="ECO:0007669"/>
    <property type="project" value="InterPro"/>
</dbReference>
<dbReference type="GO" id="GO:0031676">
    <property type="term" value="C:plasma membrane-derived thylakoid membrane"/>
    <property type="evidence" value="ECO:0007669"/>
    <property type="project" value="UniProtKB-SubCell"/>
</dbReference>
<dbReference type="GO" id="GO:0015979">
    <property type="term" value="P:photosynthesis"/>
    <property type="evidence" value="ECO:0007669"/>
    <property type="project" value="UniProtKB-UniRule"/>
</dbReference>
<dbReference type="Gene3D" id="1.20.1240.10">
    <property type="entry name" value="Photosystem I PsaL, reaction centre subunit XI"/>
    <property type="match status" value="1"/>
</dbReference>
<dbReference type="HAMAP" id="MF_00447">
    <property type="entry name" value="PSI_PsaL"/>
    <property type="match status" value="1"/>
</dbReference>
<dbReference type="InterPro" id="IPR003757">
    <property type="entry name" value="PSI_PsaL"/>
</dbReference>
<dbReference type="InterPro" id="IPR036592">
    <property type="entry name" value="PSI_PsaL_sf"/>
</dbReference>
<dbReference type="InterPro" id="IPR022980">
    <property type="entry name" value="PSI_suXI"/>
</dbReference>
<dbReference type="NCBIfam" id="NF001925">
    <property type="entry name" value="PRK00704.1-1"/>
    <property type="match status" value="1"/>
</dbReference>
<dbReference type="NCBIfam" id="NF001928">
    <property type="entry name" value="PRK00704.1-5"/>
    <property type="match status" value="1"/>
</dbReference>
<dbReference type="PANTHER" id="PTHR34803">
    <property type="entry name" value="PHOTOSYSTEM I REACTION CENTER SUBUNIT XI, CHLOROPLASTIC"/>
    <property type="match status" value="1"/>
</dbReference>
<dbReference type="PANTHER" id="PTHR34803:SF2">
    <property type="entry name" value="PHOTOSYSTEM I REACTION CENTER SUBUNIT XI, CHLOROPLASTIC"/>
    <property type="match status" value="1"/>
</dbReference>
<dbReference type="Pfam" id="PF02605">
    <property type="entry name" value="PsaL"/>
    <property type="match status" value="1"/>
</dbReference>
<dbReference type="SUPFAM" id="SSF81568">
    <property type="entry name" value="Photosystem I reaction center subunit XI, PsaL"/>
    <property type="match status" value="1"/>
</dbReference>
<name>PSAL_PROM0</name>
<organism>
    <name type="scientific">Prochlorococcus marinus (strain MIT 9301)</name>
    <dbReference type="NCBI Taxonomy" id="167546"/>
    <lineage>
        <taxon>Bacteria</taxon>
        <taxon>Bacillati</taxon>
        <taxon>Cyanobacteriota</taxon>
        <taxon>Cyanophyceae</taxon>
        <taxon>Synechococcales</taxon>
        <taxon>Prochlorococcaceae</taxon>
        <taxon>Prochlorococcus</taxon>
    </lineage>
</organism>